<feature type="chain" id="PRO_0000361971" description="Deoxynucleoside triphosphate triphosphohydrolase SAMHD1">
    <location>
        <begin position="1"/>
        <end position="632"/>
    </location>
</feature>
<feature type="domain" description="SAM" evidence="2">
    <location>
        <begin position="44"/>
        <end position="107"/>
    </location>
</feature>
<feature type="domain" description="HD" evidence="3">
    <location>
        <begin position="161"/>
        <end position="321"/>
    </location>
</feature>
<feature type="region of interest" description="Disordered" evidence="4">
    <location>
        <begin position="1"/>
        <end position="22"/>
    </location>
</feature>
<feature type="active site" evidence="1">
    <location>
        <position position="230"/>
    </location>
</feature>
<feature type="binding site" description="in chain B" evidence="1">
    <location>
        <position position="113"/>
    </location>
    <ligand>
        <name>GTP</name>
        <dbReference type="ChEBI" id="CHEBI:37565"/>
        <note>allosteric activator; ligand shared between 3 neighboring subunits of the tetramer</note>
    </ligand>
</feature>
<feature type="binding site" description="in chain B" evidence="1">
    <location>
        <position position="114"/>
    </location>
    <ligand>
        <name>GTP</name>
        <dbReference type="ChEBI" id="CHEBI:37565"/>
        <note>allosteric activator; ligand shared between 3 neighboring subunits of the tetramer</note>
    </ligand>
</feature>
<feature type="binding site" description="in chain B" evidence="1">
    <location>
        <position position="116"/>
    </location>
    <ligand>
        <name>dGTP</name>
        <dbReference type="ChEBI" id="CHEBI:61429"/>
        <label>2</label>
        <note>allosteric activator; ligand shared between 3 neighboring subunits of the tetramer</note>
    </ligand>
</feature>
<feature type="binding site" description="in chain B" evidence="1">
    <location>
        <position position="134"/>
    </location>
    <ligand>
        <name>GTP</name>
        <dbReference type="ChEBI" id="CHEBI:37565"/>
        <note>allosteric activator; ligand shared between 3 neighboring subunits of the tetramer</note>
    </ligand>
</feature>
<feature type="binding site" description="in chain B" evidence="1">
    <location>
        <position position="139"/>
    </location>
    <ligand>
        <name>GTP</name>
        <dbReference type="ChEBI" id="CHEBI:37565"/>
        <note>allosteric activator; ligand shared between 3 neighboring subunits of the tetramer</note>
    </ligand>
</feature>
<feature type="binding site" description="in chain B" evidence="1">
    <location>
        <position position="142"/>
    </location>
    <ligand>
        <name>GTP</name>
        <dbReference type="ChEBI" id="CHEBI:37565"/>
        <note>allosteric activator; ligand shared between 3 neighboring subunits of the tetramer</note>
    </ligand>
</feature>
<feature type="binding site" evidence="1">
    <location>
        <position position="146"/>
    </location>
    <ligand>
        <name>dATP</name>
        <dbReference type="ChEBI" id="CHEBI:61404"/>
        <label>1</label>
        <note>substrate</note>
    </ligand>
</feature>
<feature type="binding site" evidence="1">
    <location>
        <position position="146"/>
    </location>
    <ligand>
        <name>dCTP</name>
        <dbReference type="ChEBI" id="CHEBI:61481"/>
        <label>1</label>
        <note>substrate</note>
    </ligand>
</feature>
<feature type="binding site" evidence="1">
    <location>
        <position position="146"/>
    </location>
    <ligand>
        <name>dGTP</name>
        <dbReference type="ChEBI" id="CHEBI:61429"/>
        <label>1</label>
        <note>substrate</note>
    </ligand>
</feature>
<feature type="binding site" evidence="1">
    <location>
        <position position="146"/>
    </location>
    <ligand>
        <name>dTTP</name>
        <dbReference type="ChEBI" id="CHEBI:37568"/>
        <label>1</label>
        <note>substrate</note>
    </ligand>
</feature>
<feature type="binding site" evidence="1">
    <location>
        <position position="147"/>
    </location>
    <ligand>
        <name>dGTP</name>
        <dbReference type="ChEBI" id="CHEBI:61429"/>
        <label>1</label>
        <note>substrate</note>
    </ligand>
</feature>
<feature type="binding site" description="in chain C" evidence="1">
    <location>
        <position position="153"/>
    </location>
    <ligand>
        <name>dGTP</name>
        <dbReference type="ChEBI" id="CHEBI:61429"/>
        <label>2</label>
        <note>allosteric activator; ligand shared between 3 neighboring subunits of the tetramer</note>
    </ligand>
</feature>
<feature type="binding site" evidence="1">
    <location>
        <position position="161"/>
    </location>
    <ligand>
        <name>dATP</name>
        <dbReference type="ChEBI" id="CHEBI:61404"/>
        <label>1</label>
        <note>substrate</note>
    </ligand>
</feature>
<feature type="binding site" evidence="1">
    <location>
        <position position="161"/>
    </location>
    <ligand>
        <name>dCTP</name>
        <dbReference type="ChEBI" id="CHEBI:61481"/>
        <label>1</label>
        <note>substrate</note>
    </ligand>
</feature>
<feature type="binding site" evidence="1">
    <location>
        <position position="161"/>
    </location>
    <ligand>
        <name>dGTP</name>
        <dbReference type="ChEBI" id="CHEBI:61429"/>
        <label>1</label>
        <note>substrate</note>
    </ligand>
</feature>
<feature type="binding site" evidence="1">
    <location>
        <position position="161"/>
    </location>
    <ligand>
        <name>dTTP</name>
        <dbReference type="ChEBI" id="CHEBI:37568"/>
        <label>1</label>
        <note>substrate</note>
    </ligand>
</feature>
<feature type="binding site" evidence="1">
    <location>
        <position position="164"/>
    </location>
    <ligand>
        <name>Mn(2+)</name>
        <dbReference type="ChEBI" id="CHEBI:29035"/>
    </ligand>
</feature>
<feature type="binding site" evidence="1">
    <location>
        <position position="203"/>
    </location>
    <ligand>
        <name>Mn(2+)</name>
        <dbReference type="ChEBI" id="CHEBI:29035"/>
    </ligand>
</feature>
<feature type="binding site" evidence="1">
    <location>
        <position position="204"/>
    </location>
    <ligand>
        <name>Mn(2+)</name>
        <dbReference type="ChEBI" id="CHEBI:29035"/>
    </ligand>
</feature>
<feature type="binding site" evidence="1">
    <location>
        <position position="207"/>
    </location>
    <ligand>
        <name>dATP</name>
        <dbReference type="ChEBI" id="CHEBI:61404"/>
        <label>1</label>
        <note>substrate</note>
    </ligand>
</feature>
<feature type="binding site" evidence="1">
    <location>
        <position position="207"/>
    </location>
    <ligand>
        <name>dCTP</name>
        <dbReference type="ChEBI" id="CHEBI:61481"/>
        <label>1</label>
        <note>substrate</note>
    </ligand>
</feature>
<feature type="binding site" evidence="1">
    <location>
        <position position="207"/>
    </location>
    <ligand>
        <name>dTTP</name>
        <dbReference type="ChEBI" id="CHEBI:37568"/>
        <label>1</label>
        <note>substrate</note>
    </ligand>
</feature>
<feature type="binding site" evidence="1">
    <location>
        <position position="212"/>
    </location>
    <ligand>
        <name>dATP</name>
        <dbReference type="ChEBI" id="CHEBI:61404"/>
        <label>1</label>
        <note>substrate</note>
    </ligand>
</feature>
<feature type="binding site" evidence="1">
    <location>
        <position position="212"/>
    </location>
    <ligand>
        <name>dCTP</name>
        <dbReference type="ChEBI" id="CHEBI:61481"/>
        <label>1</label>
        <note>substrate</note>
    </ligand>
</feature>
<feature type="binding site" evidence="1">
    <location>
        <position position="212"/>
    </location>
    <ligand>
        <name>dTTP</name>
        <dbReference type="ChEBI" id="CHEBI:37568"/>
        <label>1</label>
        <note>substrate</note>
    </ligand>
</feature>
<feature type="binding site" evidence="1">
    <location>
        <position position="316"/>
    </location>
    <ligand>
        <name>Mn(2+)</name>
        <dbReference type="ChEBI" id="CHEBI:29035"/>
    </ligand>
</feature>
<feature type="binding site" evidence="1">
    <location>
        <position position="317"/>
    </location>
    <ligand>
        <name>dATP</name>
        <dbReference type="ChEBI" id="CHEBI:61404"/>
        <label>1</label>
        <note>substrate</note>
    </ligand>
</feature>
<feature type="binding site" evidence="1">
    <location>
        <position position="317"/>
    </location>
    <ligand>
        <name>dCTP</name>
        <dbReference type="ChEBI" id="CHEBI:61481"/>
        <label>1</label>
        <note>substrate</note>
    </ligand>
</feature>
<feature type="binding site" evidence="1">
    <location>
        <position position="317"/>
    </location>
    <ligand>
        <name>dGTP</name>
        <dbReference type="ChEBI" id="CHEBI:61429"/>
        <label>1</label>
        <note>substrate</note>
    </ligand>
</feature>
<feature type="binding site" evidence="1">
    <location>
        <position position="317"/>
    </location>
    <ligand>
        <name>dTTP</name>
        <dbReference type="ChEBI" id="CHEBI:37568"/>
        <label>1</label>
        <note>substrate</note>
    </ligand>
</feature>
<feature type="binding site" evidence="1">
    <location>
        <position position="320"/>
    </location>
    <ligand>
        <name>dATP</name>
        <dbReference type="ChEBI" id="CHEBI:61404"/>
        <label>1</label>
        <note>substrate</note>
    </ligand>
</feature>
<feature type="binding site" evidence="1">
    <location>
        <position position="320"/>
    </location>
    <ligand>
        <name>dCTP</name>
        <dbReference type="ChEBI" id="CHEBI:61481"/>
        <label>1</label>
        <note>substrate</note>
    </ligand>
</feature>
<feature type="binding site" evidence="1">
    <location>
        <position position="320"/>
    </location>
    <ligand>
        <name>dGTP</name>
        <dbReference type="ChEBI" id="CHEBI:61429"/>
        <label>1</label>
        <note>substrate</note>
    </ligand>
</feature>
<feature type="binding site" evidence="1">
    <location>
        <position position="320"/>
    </location>
    <ligand>
        <name>dTTP</name>
        <dbReference type="ChEBI" id="CHEBI:37568"/>
        <label>1</label>
        <note>substrate</note>
    </ligand>
</feature>
<feature type="binding site" evidence="1">
    <location>
        <position position="324"/>
    </location>
    <ligand>
        <name>dATP</name>
        <dbReference type="ChEBI" id="CHEBI:61404"/>
        <label>1</label>
        <note>substrate</note>
    </ligand>
</feature>
<feature type="binding site" evidence="1">
    <location>
        <position position="324"/>
    </location>
    <ligand>
        <name>dCTP</name>
        <dbReference type="ChEBI" id="CHEBI:61481"/>
        <label>1</label>
        <note>substrate</note>
    </ligand>
</feature>
<feature type="binding site" evidence="1">
    <location>
        <position position="324"/>
    </location>
    <ligand>
        <name>dGTP</name>
        <dbReference type="ChEBI" id="CHEBI:61429"/>
        <label>1</label>
        <note>substrate</note>
    </ligand>
</feature>
<feature type="binding site" evidence="1">
    <location>
        <position position="324"/>
    </location>
    <ligand>
        <name>dTTP</name>
        <dbReference type="ChEBI" id="CHEBI:37568"/>
        <label>1</label>
        <note>substrate</note>
    </ligand>
</feature>
<feature type="binding site" description="in chain A" evidence="1">
    <location>
        <position position="338"/>
    </location>
    <ligand>
        <name>dGTP</name>
        <dbReference type="ChEBI" id="CHEBI:61429"/>
        <label>2</label>
        <note>allosteric activator; ligand shared between 3 neighboring subunits of the tetramer</note>
    </ligand>
</feature>
<feature type="binding site" description="in chain A" evidence="1">
    <location>
        <position position="357"/>
    </location>
    <ligand>
        <name>dGTP</name>
        <dbReference type="ChEBI" id="CHEBI:61429"/>
        <label>2</label>
        <note>allosteric activator; ligand shared between 3 neighboring subunits of the tetramer</note>
    </ligand>
</feature>
<feature type="binding site" description="in chain A" evidence="1">
    <location>
        <position position="359"/>
    </location>
    <ligand>
        <name>dGTP</name>
        <dbReference type="ChEBI" id="CHEBI:61429"/>
        <label>2</label>
        <note>allosteric activator; ligand shared between 3 neighboring subunits of the tetramer</note>
    </ligand>
</feature>
<feature type="binding site" description="in chain A" evidence="1">
    <location>
        <position position="363"/>
    </location>
    <ligand>
        <name>dGTP</name>
        <dbReference type="ChEBI" id="CHEBI:61429"/>
        <label>2</label>
        <note>allosteric activator; ligand shared between 3 neighboring subunits of the tetramer</note>
    </ligand>
</feature>
<feature type="binding site" evidence="1">
    <location>
        <position position="371"/>
    </location>
    <ligand>
        <name>dATP</name>
        <dbReference type="ChEBI" id="CHEBI:61404"/>
        <label>1</label>
        <note>substrate</note>
    </ligand>
</feature>
<feature type="binding site" evidence="1">
    <location>
        <position position="371"/>
    </location>
    <ligand>
        <name>dCTP</name>
        <dbReference type="ChEBI" id="CHEBI:61481"/>
        <label>1</label>
        <note>substrate</note>
    </ligand>
</feature>
<feature type="binding site" evidence="1">
    <location>
        <position position="371"/>
    </location>
    <ligand>
        <name>dGTP</name>
        <dbReference type="ChEBI" id="CHEBI:61429"/>
        <label>1</label>
        <note>substrate</note>
    </ligand>
</feature>
<feature type="binding site" evidence="1">
    <location>
        <position position="379"/>
    </location>
    <ligand>
        <name>dGTP</name>
        <dbReference type="ChEBI" id="CHEBI:61429"/>
        <label>1</label>
        <note>substrate</note>
    </ligand>
</feature>
<feature type="binding site" evidence="1">
    <location>
        <position position="380"/>
    </location>
    <ligand>
        <name>dATP</name>
        <dbReference type="ChEBI" id="CHEBI:61404"/>
        <label>1</label>
        <note>substrate</note>
    </ligand>
</feature>
<feature type="binding site" evidence="1">
    <location>
        <position position="380"/>
    </location>
    <ligand>
        <name>dCTP</name>
        <dbReference type="ChEBI" id="CHEBI:61481"/>
        <label>1</label>
        <note>substrate</note>
    </ligand>
</feature>
<feature type="binding site" evidence="1">
    <location>
        <position position="380"/>
    </location>
    <ligand>
        <name>dGTP</name>
        <dbReference type="ChEBI" id="CHEBI:61429"/>
        <label>1</label>
        <note>substrate</note>
    </ligand>
</feature>
<feature type="binding site" evidence="1">
    <location>
        <position position="380"/>
    </location>
    <ligand>
        <name>dTTP</name>
        <dbReference type="ChEBI" id="CHEBI:37568"/>
        <label>1</label>
        <note>substrate</note>
    </ligand>
</feature>
<feature type="binding site" description="in chain C" evidence="1">
    <location>
        <position position="381"/>
    </location>
    <ligand>
        <name>dGTP</name>
        <dbReference type="ChEBI" id="CHEBI:61429"/>
        <label>2</label>
        <note>allosteric activator; ligand shared between 3 neighboring subunits of the tetramer</note>
    </ligand>
</feature>
<feature type="binding site" description="in chain C" evidence="1">
    <location>
        <position position="382"/>
    </location>
    <ligand>
        <name>dGTP</name>
        <dbReference type="ChEBI" id="CHEBI:61429"/>
        <label>2</label>
        <note>allosteric activator; ligand shared between 3 neighboring subunits of the tetramer</note>
    </ligand>
</feature>
<feature type="binding site" description="in chain C" evidence="1">
    <location>
        <position position="456"/>
    </location>
    <ligand>
        <name>GTP</name>
        <dbReference type="ChEBI" id="CHEBI:37565"/>
        <note>allosteric activator; ligand shared between 3 neighboring subunits of the tetramer</note>
    </ligand>
</feature>
<feature type="binding site" description="in chain C" evidence="1">
    <location>
        <position position="460"/>
    </location>
    <ligand>
        <name>GTP</name>
        <dbReference type="ChEBI" id="CHEBI:37565"/>
        <note>allosteric activator; ligand shared between 3 neighboring subunits of the tetramer</note>
    </ligand>
</feature>
<feature type="binding site" description="in chain A" evidence="1">
    <location>
        <position position="529"/>
    </location>
    <ligand>
        <name>dGTP</name>
        <dbReference type="ChEBI" id="CHEBI:61429"/>
        <label>2</label>
        <note>allosteric activator; ligand shared between 3 neighboring subunits of the tetramer</note>
    </ligand>
</feature>
<feature type="binding site" description="in chain A" evidence="1">
    <location>
        <position position="529"/>
    </location>
    <ligand>
        <name>GTP</name>
        <dbReference type="ChEBI" id="CHEBI:37565"/>
        <note>allosteric activator; ligand shared between 3 neighboring subunits of the tetramer</note>
    </ligand>
</feature>
<organism>
    <name type="scientific">Xenopus laevis</name>
    <name type="common">African clawed frog</name>
    <dbReference type="NCBI Taxonomy" id="8355"/>
    <lineage>
        <taxon>Eukaryota</taxon>
        <taxon>Metazoa</taxon>
        <taxon>Chordata</taxon>
        <taxon>Craniata</taxon>
        <taxon>Vertebrata</taxon>
        <taxon>Euteleostomi</taxon>
        <taxon>Amphibia</taxon>
        <taxon>Batrachia</taxon>
        <taxon>Anura</taxon>
        <taxon>Pipoidea</taxon>
        <taxon>Pipidae</taxon>
        <taxon>Xenopodinae</taxon>
        <taxon>Xenopus</taxon>
        <taxon>Xenopus</taxon>
    </lineage>
</organism>
<accession>Q6INN8</accession>
<evidence type="ECO:0000250" key="1">
    <source>
        <dbReference type="UniProtKB" id="Q9Y3Z3"/>
    </source>
</evidence>
<evidence type="ECO:0000255" key="2">
    <source>
        <dbReference type="PROSITE-ProRule" id="PRU00184"/>
    </source>
</evidence>
<evidence type="ECO:0000255" key="3">
    <source>
        <dbReference type="PROSITE-ProRule" id="PRU01175"/>
    </source>
</evidence>
<evidence type="ECO:0000256" key="4">
    <source>
        <dbReference type="SAM" id="MobiDB-lite"/>
    </source>
</evidence>
<evidence type="ECO:0000269" key="5">
    <source>
    </source>
</evidence>
<evidence type="ECO:0000305" key="6"/>
<gene>
    <name evidence="1" type="primary">samhd1</name>
</gene>
<protein>
    <recommendedName>
        <fullName evidence="6">Deoxynucleoside triphosphate triphosphohydrolase SAMHD1</fullName>
        <shortName evidence="6">dNTPase</shortName>
        <ecNumber evidence="1">3.1.5.-</ecNumber>
    </recommendedName>
</protein>
<keyword id="KW-0021">Allosteric enzyme</keyword>
<keyword id="KW-0051">Antiviral defense</keyword>
<keyword id="KW-0158">Chromosome</keyword>
<keyword id="KW-0227">DNA damage</keyword>
<keyword id="KW-0234">DNA repair</keyword>
<keyword id="KW-0235">DNA replication</keyword>
<keyword id="KW-0342">GTP-binding</keyword>
<keyword id="KW-0378">Hydrolase</keyword>
<keyword id="KW-0391">Immunity</keyword>
<keyword id="KW-0399">Innate immunity</keyword>
<keyword id="KW-0464">Manganese</keyword>
<keyword id="KW-0479">Metal-binding</keyword>
<keyword id="KW-0547">Nucleotide-binding</keyword>
<keyword id="KW-0539">Nucleus</keyword>
<keyword id="KW-1185">Reference proteome</keyword>
<keyword id="KW-0862">Zinc</keyword>
<name>SAMH1_XENLA</name>
<comment type="function">
    <text evidence="1 5">Protein that acts both as a host restriction factor involved in defense response to virus and as a regulator of DNA end resection at stalled replication forks (By similarity). Has deoxynucleoside triphosphate (dNTPase) activity, which is required to restrict infection by viruses: dNTPase activity reduces cellular dNTP levels to levels too low for retroviral reverse transcription to occur, blocking early-stage virus replication in dendritic and other myeloid cells (By similarity). Functions during S phase at stalled DNA replication forks to promote the resection of gapped or reversed forks: acts by stimulating the exonuclease activity of mre11, activating the ATR-CHK1 pathway and allowing the forks to restart replication (PubMed:29670289). Ability to promote DNA end resection at stalled replication forks is independent of dNTPase activity (PubMed:29670289).</text>
</comment>
<comment type="catalytic activity">
    <reaction evidence="1">
        <text>a 2'-deoxyribonucleoside 5'-triphosphate + H2O = a 2'-deoxyribonucleoside + triphosphate + H(+)</text>
        <dbReference type="Rhea" id="RHEA:46148"/>
        <dbReference type="ChEBI" id="CHEBI:15377"/>
        <dbReference type="ChEBI" id="CHEBI:15378"/>
        <dbReference type="ChEBI" id="CHEBI:18036"/>
        <dbReference type="ChEBI" id="CHEBI:18274"/>
        <dbReference type="ChEBI" id="CHEBI:61560"/>
    </reaction>
    <physiologicalReaction direction="left-to-right" evidence="1">
        <dbReference type="Rhea" id="RHEA:46149"/>
    </physiologicalReaction>
</comment>
<comment type="catalytic activity">
    <reaction evidence="1">
        <text>dATP + H2O = 2'-deoxyadenosine + triphosphate + H(+)</text>
        <dbReference type="Rhea" id="RHEA:67648"/>
        <dbReference type="ChEBI" id="CHEBI:15377"/>
        <dbReference type="ChEBI" id="CHEBI:15378"/>
        <dbReference type="ChEBI" id="CHEBI:17256"/>
        <dbReference type="ChEBI" id="CHEBI:18036"/>
        <dbReference type="ChEBI" id="CHEBI:61404"/>
    </reaction>
    <physiologicalReaction direction="left-to-right" evidence="1">
        <dbReference type="Rhea" id="RHEA:67649"/>
    </physiologicalReaction>
</comment>
<comment type="catalytic activity">
    <reaction evidence="1">
        <text>dCTP + H2O = 2'-deoxycytidine + triphosphate + H(+)</text>
        <dbReference type="Rhea" id="RHEA:80083"/>
        <dbReference type="ChEBI" id="CHEBI:15377"/>
        <dbReference type="ChEBI" id="CHEBI:15378"/>
        <dbReference type="ChEBI" id="CHEBI:15698"/>
        <dbReference type="ChEBI" id="CHEBI:18036"/>
        <dbReference type="ChEBI" id="CHEBI:61481"/>
    </reaction>
    <physiologicalReaction direction="left-to-right" evidence="1">
        <dbReference type="Rhea" id="RHEA:80084"/>
    </physiologicalReaction>
</comment>
<comment type="catalytic activity">
    <reaction evidence="1">
        <text>dGTP + H2O = 2'-deoxyguanosine + triphosphate + H(+)</text>
        <dbReference type="Rhea" id="RHEA:15193"/>
        <dbReference type="ChEBI" id="CHEBI:15377"/>
        <dbReference type="ChEBI" id="CHEBI:15378"/>
        <dbReference type="ChEBI" id="CHEBI:17172"/>
        <dbReference type="ChEBI" id="CHEBI:18036"/>
        <dbReference type="ChEBI" id="CHEBI:61429"/>
    </reaction>
    <physiologicalReaction direction="left-to-right" evidence="1">
        <dbReference type="Rhea" id="RHEA:15194"/>
    </physiologicalReaction>
</comment>
<comment type="catalytic activity">
    <reaction evidence="1">
        <text>dTTP + H2O = thymidine + triphosphate + H(+)</text>
        <dbReference type="Rhea" id="RHEA:80079"/>
        <dbReference type="ChEBI" id="CHEBI:15377"/>
        <dbReference type="ChEBI" id="CHEBI:15378"/>
        <dbReference type="ChEBI" id="CHEBI:17748"/>
        <dbReference type="ChEBI" id="CHEBI:18036"/>
        <dbReference type="ChEBI" id="CHEBI:37568"/>
    </reaction>
    <physiologicalReaction direction="left-to-right" evidence="1">
        <dbReference type="Rhea" id="RHEA:80080"/>
    </physiologicalReaction>
</comment>
<comment type="cofactor">
    <cofactor evidence="1">
        <name>Zn(2+)</name>
        <dbReference type="ChEBI" id="CHEBI:29105"/>
    </cofactor>
    <text evidence="1">Binds 1 zinc ion per subunit.</text>
</comment>
<comment type="activity regulation">
    <text evidence="1">Allosterically activated and regulated via the combined actions of GTP and dNTPs (dATP, dGTP, dTTP and dCTP): Allosteric site 1 binds GTP, while allosteric site 2 binds dNTP. Allosteric activation promotes the formation of highly active homotetramers.</text>
</comment>
<comment type="subunit">
    <text evidence="1 5">Homodimer; in absence of GTP and dNTP (By similarity). Homotetramer; in GTP- and dNTP-bound form (By similarity). Interacts with rbbp8/CtIP (PubMed:29670289).</text>
</comment>
<comment type="subcellular location">
    <subcellularLocation>
        <location evidence="1">Nucleus</location>
    </subcellularLocation>
    <subcellularLocation>
        <location evidence="5">Chromosome</location>
    </subcellularLocation>
    <text evidence="5">Localizes to sites of DNA double-strand breaks in response to DNA damage.</text>
</comment>
<comment type="similarity">
    <text evidence="6">Belongs to the SAMHD1 family.</text>
</comment>
<comment type="sequence caution" evidence="6">
    <conflict type="erroneous initiation">
        <sequence resource="EMBL-CDS" id="AAH72238"/>
    </conflict>
</comment>
<sequence length="632" mass="72749">MKGINGAKRVRHDASPSAQDGYVTPEKRVKRWSGGQTAANYREWDVEEVCLFLASHGLGELEVIFRENKIKGRILEYLTDSHLKDLQISSVALRLDLLSCLRMLCQNSPSIMKVFNDPIHGHIELHPLLVRIIDTPEFQRLRYIKQLGGSYYVFPGASHNRFEHSIGVGYLAGCLVQALHERQPDLQIDMRDMLCVQIAGLCHDLGHGPFSHMFDGRFMPLACPQKKFKHESASVAMFDHLIQSNGLEEAMKENGLCLPDDLTFIKEQIAGPLSSEAEQQFNSSPNSSSWPYRGRTEEKSFLYEIVANKRNGIDVDKWDYFARDCHHLGIQNNFDYKRFLKFARVCEVGSKKHICTRDKEVGNLYDMFHTRNCLHRRAYQHKVGNIIETMITDAFVKADPHIKIEGANGKYYSISGSVDDMVAYTKLTDNIYHQILYSNDPNLKEAREILQKVERRHLYKYIGQTHPHSNSRIEPDKYDKLPADLASSVPQTSAKDVELHAEDFIVDVIHMDYGMKEQNPINNVRFYCKADPRKAIKIRRDQVSQLLPEKFAEQIIRVYCKKTDEKSLETAKRYFIQWCMNKDFSKPQDGDVVAPDMTPLKASWVDDDDDEDNEGKQQTELLHKSRVKLFTN</sequence>
<proteinExistence type="evidence at protein level"/>
<reference key="1">
    <citation type="submission" date="2004-06" db="EMBL/GenBank/DDBJ databases">
        <authorList>
            <consortium name="NIH - Xenopus Gene Collection (XGC) project"/>
        </authorList>
    </citation>
    <scope>NUCLEOTIDE SEQUENCE [LARGE SCALE MRNA]</scope>
    <source>
        <tissue>Embryo</tissue>
    </source>
</reference>
<reference key="2">
    <citation type="journal article" date="2018" name="Nature">
        <title>SAMHD1 acts at stalled replication forks to prevent interferon induction.</title>
        <authorList>
            <person name="Coquel F."/>
            <person name="Silva M.J."/>
            <person name="Techer H."/>
            <person name="Zadorozhny K."/>
            <person name="Sharma S."/>
            <person name="Nieminuszczy J."/>
            <person name="Mettling C."/>
            <person name="Dardillac E."/>
            <person name="Barthe A."/>
            <person name="Schmitz A.L."/>
            <person name="Promonet A."/>
            <person name="Cribier A."/>
            <person name="Sarrazin A."/>
            <person name="Niedzwiedz W."/>
            <person name="Lopez B."/>
            <person name="Costanzo V."/>
            <person name="Krejci L."/>
            <person name="Chabes A."/>
            <person name="Benkirane M."/>
            <person name="Lin Y.L."/>
            <person name="Pasero P."/>
        </authorList>
    </citation>
    <scope>FUNCTION</scope>
    <scope>SUBCELLULAR LOCATION</scope>
    <scope>INTERACTION WITH RBBP8</scope>
</reference>
<dbReference type="EC" id="3.1.5.-" evidence="1"/>
<dbReference type="EMBL" id="BC072238">
    <property type="protein sequence ID" value="AAH72238.1"/>
    <property type="status" value="ALT_INIT"/>
    <property type="molecule type" value="mRNA"/>
</dbReference>
<dbReference type="SMR" id="Q6INN8"/>
<dbReference type="AGR" id="Xenbase:XB-GENE-976506"/>
<dbReference type="Xenbase" id="XB-GENE-976506">
    <property type="gene designation" value="samhd1.L"/>
</dbReference>
<dbReference type="Proteomes" id="UP000186698">
    <property type="component" value="Unplaced"/>
</dbReference>
<dbReference type="GO" id="GO:0005634">
    <property type="term" value="C:nucleus"/>
    <property type="evidence" value="ECO:0000250"/>
    <property type="project" value="UniProtKB"/>
</dbReference>
<dbReference type="GO" id="GO:0035861">
    <property type="term" value="C:site of double-strand break"/>
    <property type="evidence" value="ECO:0000314"/>
    <property type="project" value="UniProtKB"/>
</dbReference>
<dbReference type="GO" id="GO:0106375">
    <property type="term" value="F:deoxynucleoside triphosphate hydrolase activity"/>
    <property type="evidence" value="ECO:0000250"/>
    <property type="project" value="UniProtKB"/>
</dbReference>
<dbReference type="GO" id="GO:0032567">
    <property type="term" value="F:dGTP binding"/>
    <property type="evidence" value="ECO:0000250"/>
    <property type="project" value="UniProtKB"/>
</dbReference>
<dbReference type="GO" id="GO:0008832">
    <property type="term" value="F:dGTPase activity"/>
    <property type="evidence" value="ECO:0000250"/>
    <property type="project" value="UniProtKB"/>
</dbReference>
<dbReference type="GO" id="GO:0005525">
    <property type="term" value="F:GTP binding"/>
    <property type="evidence" value="ECO:0007669"/>
    <property type="project" value="UniProtKB-KW"/>
</dbReference>
<dbReference type="GO" id="GO:0003676">
    <property type="term" value="F:nucleic acid binding"/>
    <property type="evidence" value="ECO:0000250"/>
    <property type="project" value="UniProtKB"/>
</dbReference>
<dbReference type="GO" id="GO:0003723">
    <property type="term" value="F:RNA binding"/>
    <property type="evidence" value="ECO:0000250"/>
    <property type="project" value="UniProtKB"/>
</dbReference>
<dbReference type="GO" id="GO:0003697">
    <property type="term" value="F:single-stranded DNA binding"/>
    <property type="evidence" value="ECO:0000250"/>
    <property type="project" value="UniProtKB"/>
</dbReference>
<dbReference type="GO" id="GO:0016793">
    <property type="term" value="F:triphosphoric monoester hydrolase activity"/>
    <property type="evidence" value="ECO:0000250"/>
    <property type="project" value="UniProtKB"/>
</dbReference>
<dbReference type="GO" id="GO:0008270">
    <property type="term" value="F:zinc ion binding"/>
    <property type="evidence" value="ECO:0000250"/>
    <property type="project" value="UniProtKB"/>
</dbReference>
<dbReference type="GO" id="GO:0046061">
    <property type="term" value="P:dATP catabolic process"/>
    <property type="evidence" value="ECO:0000250"/>
    <property type="project" value="UniProtKB"/>
</dbReference>
<dbReference type="GO" id="GO:0051607">
    <property type="term" value="P:defense response to virus"/>
    <property type="evidence" value="ECO:0000250"/>
    <property type="project" value="UniProtKB"/>
</dbReference>
<dbReference type="GO" id="GO:0009264">
    <property type="term" value="P:deoxyribonucleotide catabolic process"/>
    <property type="evidence" value="ECO:0000250"/>
    <property type="project" value="UniProtKB"/>
</dbReference>
<dbReference type="GO" id="GO:0006203">
    <property type="term" value="P:dGTP catabolic process"/>
    <property type="evidence" value="ECO:0000250"/>
    <property type="project" value="UniProtKB"/>
</dbReference>
<dbReference type="GO" id="GO:0006974">
    <property type="term" value="P:DNA damage response"/>
    <property type="evidence" value="ECO:0000250"/>
    <property type="project" value="UniProtKB"/>
</dbReference>
<dbReference type="GO" id="GO:0110025">
    <property type="term" value="P:DNA strand resection involved in replication fork processing"/>
    <property type="evidence" value="ECO:0000315"/>
    <property type="project" value="UniProtKB"/>
</dbReference>
<dbReference type="GO" id="GO:0000724">
    <property type="term" value="P:double-strand break repair via homologous recombination"/>
    <property type="evidence" value="ECO:0000250"/>
    <property type="project" value="UniProtKB"/>
</dbReference>
<dbReference type="GO" id="GO:0045087">
    <property type="term" value="P:innate immune response"/>
    <property type="evidence" value="ECO:0007669"/>
    <property type="project" value="UniProtKB-KW"/>
</dbReference>
<dbReference type="GO" id="GO:0060339">
    <property type="term" value="P:negative regulation of type I interferon-mediated signaling pathway"/>
    <property type="evidence" value="ECO:0000250"/>
    <property type="project" value="UniProtKB"/>
</dbReference>
<dbReference type="GO" id="GO:0051289">
    <property type="term" value="P:protein homotetramerization"/>
    <property type="evidence" value="ECO:0000250"/>
    <property type="project" value="UniProtKB"/>
</dbReference>
<dbReference type="GO" id="GO:0045088">
    <property type="term" value="P:regulation of innate immune response"/>
    <property type="evidence" value="ECO:0000250"/>
    <property type="project" value="UniProtKB"/>
</dbReference>
<dbReference type="GO" id="GO:0016446">
    <property type="term" value="P:somatic hypermutation of immunoglobulin genes"/>
    <property type="evidence" value="ECO:0000250"/>
    <property type="project" value="UniProtKB"/>
</dbReference>
<dbReference type="CDD" id="cd00077">
    <property type="entry name" value="HDc"/>
    <property type="match status" value="1"/>
</dbReference>
<dbReference type="CDD" id="cd09508">
    <property type="entry name" value="SAM_HD"/>
    <property type="match status" value="1"/>
</dbReference>
<dbReference type="FunFam" id="1.10.3210.10:FF:000015">
    <property type="entry name" value="Deoxynucleoside triphosphate triphosphohydrolase SAMHD1"/>
    <property type="match status" value="1"/>
</dbReference>
<dbReference type="FunFam" id="1.10.150.50:FF:000067">
    <property type="entry name" value="SAM and HD domain-containing deoxynucleoside triphosphate triphosphohydrolase 1"/>
    <property type="match status" value="1"/>
</dbReference>
<dbReference type="FunFam" id="3.30.70.2760:FF:000002">
    <property type="entry name" value="SAM and HD domain-containing deoxynucleoside triphosphate triphosphohydrolase 1"/>
    <property type="match status" value="1"/>
</dbReference>
<dbReference type="Gene3D" id="3.30.70.2760">
    <property type="match status" value="1"/>
</dbReference>
<dbReference type="Gene3D" id="1.10.3210.10">
    <property type="entry name" value="Hypothetical protein af1432"/>
    <property type="match status" value="1"/>
</dbReference>
<dbReference type="Gene3D" id="1.10.150.50">
    <property type="entry name" value="Transcription Factor, Ets-1"/>
    <property type="match status" value="1"/>
</dbReference>
<dbReference type="InterPro" id="IPR050135">
    <property type="entry name" value="dGTPase-like"/>
</dbReference>
<dbReference type="InterPro" id="IPR003607">
    <property type="entry name" value="HD/PDEase_dom"/>
</dbReference>
<dbReference type="InterPro" id="IPR006674">
    <property type="entry name" value="HD_domain"/>
</dbReference>
<dbReference type="InterPro" id="IPR001660">
    <property type="entry name" value="SAM"/>
</dbReference>
<dbReference type="InterPro" id="IPR013761">
    <property type="entry name" value="SAM/pointed_sf"/>
</dbReference>
<dbReference type="PANTHER" id="PTHR11373">
    <property type="entry name" value="DEOXYNUCLEOSIDE TRIPHOSPHATE TRIPHOSPHOHYDROLASE"/>
    <property type="match status" value="1"/>
</dbReference>
<dbReference type="PANTHER" id="PTHR11373:SF46">
    <property type="entry name" value="DEOXYNUCLEOSIDE TRIPHOSPHATE TRIPHOSPHOHYDROLASE SAMHD1"/>
    <property type="match status" value="1"/>
</dbReference>
<dbReference type="Pfam" id="PF01966">
    <property type="entry name" value="HD"/>
    <property type="match status" value="1"/>
</dbReference>
<dbReference type="Pfam" id="PF07647">
    <property type="entry name" value="SAM_2"/>
    <property type="match status" value="1"/>
</dbReference>
<dbReference type="SMART" id="SM00471">
    <property type="entry name" value="HDc"/>
    <property type="match status" value="1"/>
</dbReference>
<dbReference type="SMART" id="SM00454">
    <property type="entry name" value="SAM"/>
    <property type="match status" value="1"/>
</dbReference>
<dbReference type="SUPFAM" id="SSF109604">
    <property type="entry name" value="HD-domain/PDEase-like"/>
    <property type="match status" value="1"/>
</dbReference>
<dbReference type="SUPFAM" id="SSF47769">
    <property type="entry name" value="SAM/Pointed domain"/>
    <property type="match status" value="1"/>
</dbReference>
<dbReference type="PROSITE" id="PS51831">
    <property type="entry name" value="HD"/>
    <property type="match status" value="1"/>
</dbReference>
<dbReference type="PROSITE" id="PS50105">
    <property type="entry name" value="SAM_DOMAIN"/>
    <property type="match status" value="1"/>
</dbReference>